<name>CYB_SORRO</name>
<reference key="1">
    <citation type="submission" date="2004-03" db="EMBL/GenBank/DDBJ databases">
        <title>Molecular phylogenetics of the Soricidae (Insectivora, Mammalia) based on mitochondrial cytochrome b gene sequences.</title>
        <authorList>
            <person name="Ohdachi S.D."/>
            <person name="Iwasa M.A."/>
            <person name="Abe H."/>
            <person name="Vogel P."/>
            <person name="Oshida T."/>
            <person name="Lin L.K."/>
            <person name="Hasegawa M."/>
        </authorList>
    </citation>
    <scope>NUCLEOTIDE SEQUENCE [GENOMIC DNA]</scope>
    <source>
        <strain>Isolate NED-180/2000</strain>
        <tissue>Muscle</tissue>
    </source>
</reference>
<reference key="2">
    <citation type="journal article" date="1997" name="Zool. Sci.">
        <title>Molecular phylogeny from nucleotide sequences of the mitochondrial cytochrome b gene and evolutionary history of Eurasian soricine shrews (Mammalia, Insectivora).</title>
        <authorList>
            <person name="Ohdachi S."/>
            <person name="Masuda R."/>
            <person name="Abe H."/>
            <person name="Adachi J."/>
            <person name="Dokuchaev N.E."/>
            <person name="Haukisalmi V."/>
            <person name="Yoshida M.C."/>
        </authorList>
    </citation>
    <scope>NUCLEOTIDE SEQUENCE [GENOMIC DNA] OF 1-134</scope>
    <source>
        <tissue>Hindfoot</tissue>
    </source>
</reference>
<comment type="function">
    <text evidence="2">Component of the ubiquinol-cytochrome c reductase complex (complex III or cytochrome b-c1 complex) that is part of the mitochondrial respiratory chain. The b-c1 complex mediates electron transfer from ubiquinol to cytochrome c. Contributes to the generation of a proton gradient across the mitochondrial membrane that is then used for ATP synthesis.</text>
</comment>
<comment type="cofactor">
    <cofactor evidence="2">
        <name>heme b</name>
        <dbReference type="ChEBI" id="CHEBI:60344"/>
    </cofactor>
    <text evidence="2">Binds 2 heme b groups non-covalently.</text>
</comment>
<comment type="subunit">
    <text evidence="2">The cytochrome bc1 complex contains 11 subunits: 3 respiratory subunits (MT-CYB, CYC1 and UQCRFS1), 2 core proteins (UQCRC1 and UQCRC2) and 6 low-molecular weight proteins (UQCRH/QCR6, UQCRB/QCR7, UQCRQ/QCR8, UQCR10/QCR9, UQCR11/QCR10 and a cleavage product of UQCRFS1). This cytochrome bc1 complex then forms a dimer.</text>
</comment>
<comment type="subcellular location">
    <subcellularLocation>
        <location evidence="2">Mitochondrion inner membrane</location>
        <topology evidence="2">Multi-pass membrane protein</topology>
    </subcellularLocation>
</comment>
<comment type="miscellaneous">
    <text evidence="1">Heme 1 (or BL or b562) is low-potential and absorbs at about 562 nm, and heme 2 (or BH or b566) is high-potential and absorbs at about 566 nm.</text>
</comment>
<comment type="similarity">
    <text evidence="3 4">Belongs to the cytochrome b family.</text>
</comment>
<comment type="caution">
    <text evidence="2">The full-length protein contains only eight transmembrane helices, not nine as predicted by bioinformatics tools.</text>
</comment>
<keyword id="KW-0249">Electron transport</keyword>
<keyword id="KW-0349">Heme</keyword>
<keyword id="KW-0408">Iron</keyword>
<keyword id="KW-0472">Membrane</keyword>
<keyword id="KW-0479">Metal-binding</keyword>
<keyword id="KW-0496">Mitochondrion</keyword>
<keyword id="KW-0999">Mitochondrion inner membrane</keyword>
<keyword id="KW-0679">Respiratory chain</keyword>
<keyword id="KW-0812">Transmembrane</keyword>
<keyword id="KW-1133">Transmembrane helix</keyword>
<keyword id="KW-0813">Transport</keyword>
<keyword id="KW-0830">Ubiquinone</keyword>
<evidence type="ECO:0000250" key="1"/>
<evidence type="ECO:0000250" key="2">
    <source>
        <dbReference type="UniProtKB" id="P00157"/>
    </source>
</evidence>
<evidence type="ECO:0000255" key="3">
    <source>
        <dbReference type="PROSITE-ProRule" id="PRU00967"/>
    </source>
</evidence>
<evidence type="ECO:0000255" key="4">
    <source>
        <dbReference type="PROSITE-ProRule" id="PRU00968"/>
    </source>
</evidence>
<sequence>MTNLRKTHPLMKIVNSSFIDLPAPSNISSWWNFGSLLGICLIIQILTGLFLAMHYTSDTMTAFSSVTHICRDVNYGWLIRYLHANGASMFFICLFLHVGRGLYYGSYMYLETWNIGVLLLFAVMATAFMGYVLPWGQMSFWGATVITNLLSAIPYIGSDLVEWIWGGFSVDKATLTRFFAFHFILPFIIAALAGVHLLFLHETGSNNPSGLSSDADKIPFHPYYTIKDILGVLLLILVLTSLVLFSPDLLGDPDNYTPANPLNTPPHIKPEWYFLFAYAILRSIPNKLGGVLALVLSILVLAVVPFLHTSKQRSMMFRPFSQCLFWVLVADLLTLTWIGGQPVEHPFIIIGQLASILYFLLILVIMPITSLLENNLLTW</sequence>
<proteinExistence type="inferred from homology"/>
<accession>O21424</accession>
<accession>Q1XIK3</accession>
<feature type="chain" id="PRO_0000061578" description="Cytochrome b">
    <location>
        <begin position="1"/>
        <end position="379"/>
    </location>
</feature>
<feature type="transmembrane region" description="Helical" evidence="2">
    <location>
        <begin position="33"/>
        <end position="53"/>
    </location>
</feature>
<feature type="transmembrane region" description="Helical" evidence="2">
    <location>
        <begin position="77"/>
        <end position="98"/>
    </location>
</feature>
<feature type="transmembrane region" description="Helical" evidence="2">
    <location>
        <begin position="113"/>
        <end position="133"/>
    </location>
</feature>
<feature type="transmembrane region" description="Helical" evidence="2">
    <location>
        <begin position="178"/>
        <end position="198"/>
    </location>
</feature>
<feature type="transmembrane region" description="Helical" evidence="2">
    <location>
        <begin position="226"/>
        <end position="246"/>
    </location>
</feature>
<feature type="transmembrane region" description="Helical" evidence="2">
    <location>
        <begin position="288"/>
        <end position="308"/>
    </location>
</feature>
<feature type="transmembrane region" description="Helical" evidence="2">
    <location>
        <begin position="320"/>
        <end position="340"/>
    </location>
</feature>
<feature type="transmembrane region" description="Helical" evidence="2">
    <location>
        <begin position="347"/>
        <end position="367"/>
    </location>
</feature>
<feature type="binding site" description="axial binding residue" evidence="2">
    <location>
        <position position="83"/>
    </location>
    <ligand>
        <name>heme b</name>
        <dbReference type="ChEBI" id="CHEBI:60344"/>
        <label>b562</label>
    </ligand>
    <ligandPart>
        <name>Fe</name>
        <dbReference type="ChEBI" id="CHEBI:18248"/>
    </ligandPart>
</feature>
<feature type="binding site" description="axial binding residue" evidence="2">
    <location>
        <position position="97"/>
    </location>
    <ligand>
        <name>heme b</name>
        <dbReference type="ChEBI" id="CHEBI:60344"/>
        <label>b566</label>
    </ligand>
    <ligandPart>
        <name>Fe</name>
        <dbReference type="ChEBI" id="CHEBI:18248"/>
    </ligandPart>
</feature>
<feature type="binding site" description="axial binding residue" evidence="2">
    <location>
        <position position="182"/>
    </location>
    <ligand>
        <name>heme b</name>
        <dbReference type="ChEBI" id="CHEBI:60344"/>
        <label>b562</label>
    </ligand>
    <ligandPart>
        <name>Fe</name>
        <dbReference type="ChEBI" id="CHEBI:18248"/>
    </ligandPart>
</feature>
<feature type="binding site" description="axial binding residue" evidence="2">
    <location>
        <position position="196"/>
    </location>
    <ligand>
        <name>heme b</name>
        <dbReference type="ChEBI" id="CHEBI:60344"/>
        <label>b566</label>
    </ligand>
    <ligandPart>
        <name>Fe</name>
        <dbReference type="ChEBI" id="CHEBI:18248"/>
    </ligandPart>
</feature>
<feature type="binding site" evidence="2">
    <location>
        <position position="201"/>
    </location>
    <ligand>
        <name>a ubiquinone</name>
        <dbReference type="ChEBI" id="CHEBI:16389"/>
    </ligand>
</feature>
<organism>
    <name type="scientific">Sorex roboratus</name>
    <name type="common">Flat-skulled shrew</name>
    <dbReference type="NCBI Taxonomy" id="62288"/>
    <lineage>
        <taxon>Eukaryota</taxon>
        <taxon>Metazoa</taxon>
        <taxon>Chordata</taxon>
        <taxon>Craniata</taxon>
        <taxon>Vertebrata</taxon>
        <taxon>Euteleostomi</taxon>
        <taxon>Mammalia</taxon>
        <taxon>Eutheria</taxon>
        <taxon>Laurasiatheria</taxon>
        <taxon>Eulipotyphla</taxon>
        <taxon>Soricidae</taxon>
        <taxon>Soricinae</taxon>
        <taxon>Sorex</taxon>
    </lineage>
</organism>
<protein>
    <recommendedName>
        <fullName>Cytochrome b</fullName>
    </recommendedName>
    <alternativeName>
        <fullName>Complex III subunit 3</fullName>
    </alternativeName>
    <alternativeName>
        <fullName>Complex III subunit III</fullName>
    </alternativeName>
    <alternativeName>
        <fullName>Cytochrome b-c1 complex subunit 3</fullName>
    </alternativeName>
    <alternativeName>
        <fullName>Ubiquinol-cytochrome-c reductase complex cytochrome b subunit</fullName>
    </alternativeName>
</protein>
<dbReference type="EMBL" id="AB175128">
    <property type="protein sequence ID" value="BAE92693.1"/>
    <property type="molecule type" value="Genomic_DNA"/>
</dbReference>
<dbReference type="EMBL" id="D85372">
    <property type="protein sequence ID" value="BAA21365.1"/>
    <property type="molecule type" value="Genomic_DNA"/>
</dbReference>
<dbReference type="SMR" id="O21424"/>
<dbReference type="GO" id="GO:0005743">
    <property type="term" value="C:mitochondrial inner membrane"/>
    <property type="evidence" value="ECO:0007669"/>
    <property type="project" value="UniProtKB-SubCell"/>
</dbReference>
<dbReference type="GO" id="GO:0045275">
    <property type="term" value="C:respiratory chain complex III"/>
    <property type="evidence" value="ECO:0007669"/>
    <property type="project" value="InterPro"/>
</dbReference>
<dbReference type="GO" id="GO:0046872">
    <property type="term" value="F:metal ion binding"/>
    <property type="evidence" value="ECO:0007669"/>
    <property type="project" value="UniProtKB-KW"/>
</dbReference>
<dbReference type="GO" id="GO:0008121">
    <property type="term" value="F:ubiquinol-cytochrome-c reductase activity"/>
    <property type="evidence" value="ECO:0007669"/>
    <property type="project" value="InterPro"/>
</dbReference>
<dbReference type="GO" id="GO:0006122">
    <property type="term" value="P:mitochondrial electron transport, ubiquinol to cytochrome c"/>
    <property type="evidence" value="ECO:0007669"/>
    <property type="project" value="TreeGrafter"/>
</dbReference>
<dbReference type="CDD" id="cd00290">
    <property type="entry name" value="cytochrome_b_C"/>
    <property type="match status" value="1"/>
</dbReference>
<dbReference type="CDD" id="cd00284">
    <property type="entry name" value="Cytochrome_b_N"/>
    <property type="match status" value="1"/>
</dbReference>
<dbReference type="FunFam" id="1.20.810.10:FF:000002">
    <property type="entry name" value="Cytochrome b"/>
    <property type="match status" value="1"/>
</dbReference>
<dbReference type="Gene3D" id="1.20.810.10">
    <property type="entry name" value="Cytochrome Bc1 Complex, Chain C"/>
    <property type="match status" value="1"/>
</dbReference>
<dbReference type="InterPro" id="IPR005798">
    <property type="entry name" value="Cyt_b/b6_C"/>
</dbReference>
<dbReference type="InterPro" id="IPR036150">
    <property type="entry name" value="Cyt_b/b6_C_sf"/>
</dbReference>
<dbReference type="InterPro" id="IPR005797">
    <property type="entry name" value="Cyt_b/b6_N"/>
</dbReference>
<dbReference type="InterPro" id="IPR027387">
    <property type="entry name" value="Cytb/b6-like_sf"/>
</dbReference>
<dbReference type="InterPro" id="IPR030689">
    <property type="entry name" value="Cytochrome_b"/>
</dbReference>
<dbReference type="InterPro" id="IPR048260">
    <property type="entry name" value="Cytochrome_b_C_euk/bac"/>
</dbReference>
<dbReference type="InterPro" id="IPR048259">
    <property type="entry name" value="Cytochrome_b_N_euk/bac"/>
</dbReference>
<dbReference type="InterPro" id="IPR016174">
    <property type="entry name" value="Di-haem_cyt_TM"/>
</dbReference>
<dbReference type="PANTHER" id="PTHR19271">
    <property type="entry name" value="CYTOCHROME B"/>
    <property type="match status" value="1"/>
</dbReference>
<dbReference type="PANTHER" id="PTHR19271:SF16">
    <property type="entry name" value="CYTOCHROME B"/>
    <property type="match status" value="1"/>
</dbReference>
<dbReference type="Pfam" id="PF00032">
    <property type="entry name" value="Cytochrom_B_C"/>
    <property type="match status" value="1"/>
</dbReference>
<dbReference type="Pfam" id="PF00033">
    <property type="entry name" value="Cytochrome_B"/>
    <property type="match status" value="1"/>
</dbReference>
<dbReference type="PIRSF" id="PIRSF038885">
    <property type="entry name" value="COB"/>
    <property type="match status" value="1"/>
</dbReference>
<dbReference type="SUPFAM" id="SSF81648">
    <property type="entry name" value="a domain/subunit of cytochrome bc1 complex (Ubiquinol-cytochrome c reductase)"/>
    <property type="match status" value="1"/>
</dbReference>
<dbReference type="SUPFAM" id="SSF81342">
    <property type="entry name" value="Transmembrane di-heme cytochromes"/>
    <property type="match status" value="1"/>
</dbReference>
<dbReference type="PROSITE" id="PS51003">
    <property type="entry name" value="CYTB_CTER"/>
    <property type="match status" value="1"/>
</dbReference>
<dbReference type="PROSITE" id="PS51002">
    <property type="entry name" value="CYTB_NTER"/>
    <property type="match status" value="1"/>
</dbReference>
<gene>
    <name type="primary">MT-CYB</name>
    <name type="synonym">COB</name>
    <name type="synonym">CYTB</name>
    <name type="synonym">MTCYB</name>
</gene>
<geneLocation type="mitochondrion"/>